<proteinExistence type="inferred from homology"/>
<feature type="chain" id="PRO_1000143401" description="ATP synthase subunit alpha">
    <location>
        <begin position="1"/>
        <end position="504"/>
    </location>
</feature>
<feature type="binding site" evidence="1">
    <location>
        <begin position="169"/>
        <end position="176"/>
    </location>
    <ligand>
        <name>ATP</name>
        <dbReference type="ChEBI" id="CHEBI:30616"/>
    </ligand>
</feature>
<feature type="site" description="Required for activity" evidence="1">
    <location>
        <position position="363"/>
    </location>
</feature>
<gene>
    <name evidence="1" type="primary">atpA</name>
    <name type="ordered locus">LEPBI_I0805</name>
</gene>
<comment type="function">
    <text evidence="1">Produces ATP from ADP in the presence of a proton gradient across the membrane. The alpha chain is a regulatory subunit.</text>
</comment>
<comment type="catalytic activity">
    <reaction evidence="1">
        <text>ATP + H2O + 4 H(+)(in) = ADP + phosphate + 5 H(+)(out)</text>
        <dbReference type="Rhea" id="RHEA:57720"/>
        <dbReference type="ChEBI" id="CHEBI:15377"/>
        <dbReference type="ChEBI" id="CHEBI:15378"/>
        <dbReference type="ChEBI" id="CHEBI:30616"/>
        <dbReference type="ChEBI" id="CHEBI:43474"/>
        <dbReference type="ChEBI" id="CHEBI:456216"/>
        <dbReference type="EC" id="7.1.2.2"/>
    </reaction>
</comment>
<comment type="subunit">
    <text evidence="1">F-type ATPases have 2 components, CF(1) - the catalytic core - and CF(0) - the membrane proton channel. CF(1) has five subunits: alpha(3), beta(3), gamma(1), delta(1), epsilon(1). CF(0) has three main subunits: a(1), b(2) and c(9-12). The alpha and beta chains form an alternating ring which encloses part of the gamma chain. CF(1) is attached to CF(0) by a central stalk formed by the gamma and epsilon chains, while a peripheral stalk is formed by the delta and b chains.</text>
</comment>
<comment type="subcellular location">
    <subcellularLocation>
        <location evidence="1">Cell inner membrane</location>
        <topology evidence="1">Peripheral membrane protein</topology>
    </subcellularLocation>
</comment>
<comment type="similarity">
    <text evidence="1">Belongs to the ATPase alpha/beta chains family.</text>
</comment>
<keyword id="KW-0066">ATP synthesis</keyword>
<keyword id="KW-0067">ATP-binding</keyword>
<keyword id="KW-0997">Cell inner membrane</keyword>
<keyword id="KW-1003">Cell membrane</keyword>
<keyword id="KW-0139">CF(1)</keyword>
<keyword id="KW-0375">Hydrogen ion transport</keyword>
<keyword id="KW-0406">Ion transport</keyword>
<keyword id="KW-0472">Membrane</keyword>
<keyword id="KW-0547">Nucleotide-binding</keyword>
<keyword id="KW-1185">Reference proteome</keyword>
<keyword id="KW-1278">Translocase</keyword>
<keyword id="KW-0813">Transport</keyword>
<name>ATPA_LEPBP</name>
<evidence type="ECO:0000255" key="1">
    <source>
        <dbReference type="HAMAP-Rule" id="MF_01346"/>
    </source>
</evidence>
<protein>
    <recommendedName>
        <fullName evidence="1">ATP synthase subunit alpha</fullName>
        <ecNumber evidence="1">7.1.2.2</ecNumber>
    </recommendedName>
    <alternativeName>
        <fullName evidence="1">ATP synthase F1 sector subunit alpha</fullName>
    </alternativeName>
    <alternativeName>
        <fullName evidence="1">F-ATPase subunit alpha</fullName>
    </alternativeName>
</protein>
<dbReference type="EC" id="7.1.2.2" evidence="1"/>
<dbReference type="EMBL" id="CP000786">
    <property type="protein sequence ID" value="ABZ96933.1"/>
    <property type="molecule type" value="Genomic_DNA"/>
</dbReference>
<dbReference type="RefSeq" id="WP_012387818.1">
    <property type="nucleotide sequence ID" value="NC_010602.1"/>
</dbReference>
<dbReference type="SMR" id="B0SLC6"/>
<dbReference type="STRING" id="456481.LEPBI_I0805"/>
<dbReference type="KEGG" id="lbi:LEPBI_I0805"/>
<dbReference type="HOGENOM" id="CLU_010091_2_1_12"/>
<dbReference type="OrthoDB" id="9803053at2"/>
<dbReference type="BioCyc" id="LBIF456481:LEPBI_RS03950-MONOMER"/>
<dbReference type="Proteomes" id="UP000001847">
    <property type="component" value="Chromosome I"/>
</dbReference>
<dbReference type="GO" id="GO:0005886">
    <property type="term" value="C:plasma membrane"/>
    <property type="evidence" value="ECO:0007669"/>
    <property type="project" value="UniProtKB-SubCell"/>
</dbReference>
<dbReference type="GO" id="GO:0045259">
    <property type="term" value="C:proton-transporting ATP synthase complex"/>
    <property type="evidence" value="ECO:0007669"/>
    <property type="project" value="UniProtKB-KW"/>
</dbReference>
<dbReference type="GO" id="GO:0043531">
    <property type="term" value="F:ADP binding"/>
    <property type="evidence" value="ECO:0007669"/>
    <property type="project" value="TreeGrafter"/>
</dbReference>
<dbReference type="GO" id="GO:0005524">
    <property type="term" value="F:ATP binding"/>
    <property type="evidence" value="ECO:0007669"/>
    <property type="project" value="UniProtKB-UniRule"/>
</dbReference>
<dbReference type="GO" id="GO:0046933">
    <property type="term" value="F:proton-transporting ATP synthase activity, rotational mechanism"/>
    <property type="evidence" value="ECO:0007669"/>
    <property type="project" value="UniProtKB-UniRule"/>
</dbReference>
<dbReference type="CDD" id="cd18113">
    <property type="entry name" value="ATP-synt_F1_alpha_C"/>
    <property type="match status" value="1"/>
</dbReference>
<dbReference type="CDD" id="cd18116">
    <property type="entry name" value="ATP-synt_F1_alpha_N"/>
    <property type="match status" value="1"/>
</dbReference>
<dbReference type="CDD" id="cd01132">
    <property type="entry name" value="F1-ATPase_alpha_CD"/>
    <property type="match status" value="1"/>
</dbReference>
<dbReference type="FunFam" id="1.20.150.20:FF:000001">
    <property type="entry name" value="ATP synthase subunit alpha"/>
    <property type="match status" value="1"/>
</dbReference>
<dbReference type="FunFam" id="2.40.30.20:FF:000001">
    <property type="entry name" value="ATP synthase subunit alpha"/>
    <property type="match status" value="1"/>
</dbReference>
<dbReference type="FunFam" id="3.40.50.300:FF:000002">
    <property type="entry name" value="ATP synthase subunit alpha"/>
    <property type="match status" value="1"/>
</dbReference>
<dbReference type="Gene3D" id="2.40.30.20">
    <property type="match status" value="1"/>
</dbReference>
<dbReference type="Gene3D" id="1.20.150.20">
    <property type="entry name" value="ATP synthase alpha/beta chain, C-terminal domain"/>
    <property type="match status" value="1"/>
</dbReference>
<dbReference type="Gene3D" id="3.40.50.300">
    <property type="entry name" value="P-loop containing nucleotide triphosphate hydrolases"/>
    <property type="match status" value="1"/>
</dbReference>
<dbReference type="HAMAP" id="MF_01346">
    <property type="entry name" value="ATP_synth_alpha_bact"/>
    <property type="match status" value="1"/>
</dbReference>
<dbReference type="InterPro" id="IPR023366">
    <property type="entry name" value="ATP_synth_asu-like_sf"/>
</dbReference>
<dbReference type="InterPro" id="IPR000793">
    <property type="entry name" value="ATP_synth_asu_C"/>
</dbReference>
<dbReference type="InterPro" id="IPR038376">
    <property type="entry name" value="ATP_synth_asu_C_sf"/>
</dbReference>
<dbReference type="InterPro" id="IPR033732">
    <property type="entry name" value="ATP_synth_F1_a_nt-bd_dom"/>
</dbReference>
<dbReference type="InterPro" id="IPR005294">
    <property type="entry name" value="ATP_synth_F1_asu"/>
</dbReference>
<dbReference type="InterPro" id="IPR020003">
    <property type="entry name" value="ATPase_a/bsu_AS"/>
</dbReference>
<dbReference type="InterPro" id="IPR004100">
    <property type="entry name" value="ATPase_F1/V1/A1_a/bsu_N"/>
</dbReference>
<dbReference type="InterPro" id="IPR036121">
    <property type="entry name" value="ATPase_F1/V1/A1_a/bsu_N_sf"/>
</dbReference>
<dbReference type="InterPro" id="IPR000194">
    <property type="entry name" value="ATPase_F1/V1/A1_a/bsu_nucl-bd"/>
</dbReference>
<dbReference type="InterPro" id="IPR027417">
    <property type="entry name" value="P-loop_NTPase"/>
</dbReference>
<dbReference type="NCBIfam" id="TIGR00962">
    <property type="entry name" value="atpA"/>
    <property type="match status" value="1"/>
</dbReference>
<dbReference type="NCBIfam" id="NF009884">
    <property type="entry name" value="PRK13343.1"/>
    <property type="match status" value="1"/>
</dbReference>
<dbReference type="PANTHER" id="PTHR48082">
    <property type="entry name" value="ATP SYNTHASE SUBUNIT ALPHA, MITOCHONDRIAL"/>
    <property type="match status" value="1"/>
</dbReference>
<dbReference type="PANTHER" id="PTHR48082:SF2">
    <property type="entry name" value="ATP SYNTHASE SUBUNIT ALPHA, MITOCHONDRIAL"/>
    <property type="match status" value="1"/>
</dbReference>
<dbReference type="Pfam" id="PF00006">
    <property type="entry name" value="ATP-synt_ab"/>
    <property type="match status" value="1"/>
</dbReference>
<dbReference type="Pfam" id="PF00306">
    <property type="entry name" value="ATP-synt_ab_C"/>
    <property type="match status" value="1"/>
</dbReference>
<dbReference type="Pfam" id="PF02874">
    <property type="entry name" value="ATP-synt_ab_N"/>
    <property type="match status" value="1"/>
</dbReference>
<dbReference type="PIRSF" id="PIRSF039088">
    <property type="entry name" value="F_ATPase_subunit_alpha"/>
    <property type="match status" value="1"/>
</dbReference>
<dbReference type="SUPFAM" id="SSF47917">
    <property type="entry name" value="C-terminal domain of alpha and beta subunits of F1 ATP synthase"/>
    <property type="match status" value="1"/>
</dbReference>
<dbReference type="SUPFAM" id="SSF50615">
    <property type="entry name" value="N-terminal domain of alpha and beta subunits of F1 ATP synthase"/>
    <property type="match status" value="1"/>
</dbReference>
<dbReference type="SUPFAM" id="SSF52540">
    <property type="entry name" value="P-loop containing nucleoside triphosphate hydrolases"/>
    <property type="match status" value="1"/>
</dbReference>
<dbReference type="PROSITE" id="PS00152">
    <property type="entry name" value="ATPASE_ALPHA_BETA"/>
    <property type="match status" value="1"/>
</dbReference>
<organism>
    <name type="scientific">Leptospira biflexa serovar Patoc (strain Patoc 1 / ATCC 23582 / Paris)</name>
    <dbReference type="NCBI Taxonomy" id="456481"/>
    <lineage>
        <taxon>Bacteria</taxon>
        <taxon>Pseudomonadati</taxon>
        <taxon>Spirochaetota</taxon>
        <taxon>Spirochaetia</taxon>
        <taxon>Leptospirales</taxon>
        <taxon>Leptospiraceae</taxon>
        <taxon>Leptospira</taxon>
    </lineage>
</organism>
<reference key="1">
    <citation type="journal article" date="2008" name="PLoS ONE">
        <title>Genome sequence of the saprophyte Leptospira biflexa provides insights into the evolution of Leptospira and the pathogenesis of leptospirosis.</title>
        <authorList>
            <person name="Picardeau M."/>
            <person name="Bulach D.M."/>
            <person name="Bouchier C."/>
            <person name="Zuerner R.L."/>
            <person name="Zidane N."/>
            <person name="Wilson P.J."/>
            <person name="Creno S."/>
            <person name="Kuczek E.S."/>
            <person name="Bommezzadri S."/>
            <person name="Davis J.C."/>
            <person name="McGrath A."/>
            <person name="Johnson M.J."/>
            <person name="Boursaux-Eude C."/>
            <person name="Seemann T."/>
            <person name="Rouy Z."/>
            <person name="Coppel R.L."/>
            <person name="Rood J.I."/>
            <person name="Lajus A."/>
            <person name="Davies J.K."/>
            <person name="Medigue C."/>
            <person name="Adler B."/>
        </authorList>
    </citation>
    <scope>NUCLEOTIDE SEQUENCE [LARGE SCALE GENOMIC DNA]</scope>
    <source>
        <strain>Patoc 1 / ATCC 23582 / Paris</strain>
    </source>
</reference>
<sequence>MKIKTDEVTSVLKQEIKNFKKDLQVEEVGTVLEVGDGIARVYGLTNVMSGELVEFQNGVRGQAFNLEENSVGVVIFGDYIKIEEGFSVKRVGKIFEVPVGPELLGRVLNPLGEVIDGKGPLNAKKTRPVESPAPGIAMRKSVHEPMQTGIKAIDAMIPIGRGQRELIIGDRGTGKTSIAIDTIINQKGKGVICVYVAIGQKASTVASTIEMLREKGALEYTIIVSANASEPAPMLYIAPYSGATMAEYFMYEEGKATLVVYDDLSKQAVAYRQMSLLLRRPPGREAYPGDVFYLHSRLLERAAKLDDKFGGGSMTALPIIETQEGEVSAYIPTNVISITDGQIYLQSNLFASGLRPAVDVGISVSRVGSAAQIKAMKKVAGTLKSDLAQFRDLEAFAQLGTELDPVTQAQLDRGYRVLEILKQPNNSPTPVEEQVISIFAVTKGFMDVVPTAKVREFEAFLLKTMREQHPEILEEIRTAKEVKQEAALQKTIKSIVEHFLAKNN</sequence>
<accession>B0SLC6</accession>